<name>KANL1_MOUSE</name>
<dbReference type="EMBL" id="AK122484">
    <property type="protein sequence ID" value="BAC65766.1"/>
    <property type="molecule type" value="mRNA"/>
</dbReference>
<dbReference type="EMBL" id="AK006970">
    <property type="protein sequence ID" value="BAB24813.1"/>
    <property type="molecule type" value="mRNA"/>
</dbReference>
<dbReference type="EMBL" id="AK037800">
    <property type="protein sequence ID" value="BAE20523.1"/>
    <property type="molecule type" value="mRNA"/>
</dbReference>
<dbReference type="EMBL" id="AK153679">
    <property type="protein sequence ID" value="BAE32141.1"/>
    <property type="molecule type" value="mRNA"/>
</dbReference>
<dbReference type="EMBL" id="AK161514">
    <property type="protein sequence ID" value="BAE36437.1"/>
    <property type="molecule type" value="mRNA"/>
</dbReference>
<dbReference type="EMBL" id="AL593843">
    <property type="status" value="NOT_ANNOTATED_CDS"/>
    <property type="molecule type" value="Genomic_DNA"/>
</dbReference>
<dbReference type="EMBL" id="BC025052">
    <property type="protein sequence ID" value="AAH25052.1"/>
    <property type="molecule type" value="mRNA"/>
</dbReference>
<dbReference type="EMBL" id="BC043121">
    <property type="protein sequence ID" value="AAH43121.2"/>
    <property type="molecule type" value="mRNA"/>
</dbReference>
<dbReference type="EMBL" id="BC053389">
    <property type="protein sequence ID" value="AAH53389.2"/>
    <property type="molecule type" value="mRNA"/>
</dbReference>
<dbReference type="EMBL" id="BC054752">
    <property type="protein sequence ID" value="AAH54752.2"/>
    <property type="molecule type" value="mRNA"/>
</dbReference>
<dbReference type="EMBL" id="BC079594">
    <property type="protein sequence ID" value="AAH79594.1"/>
    <property type="molecule type" value="mRNA"/>
</dbReference>
<dbReference type="CCDS" id="CCDS48953.1">
    <molecule id="Q80TG1-1"/>
</dbReference>
<dbReference type="RefSeq" id="NP_001074514.1">
    <molecule id="Q80TG1-1"/>
    <property type="nucleotide sequence ID" value="NM_001081045.2"/>
</dbReference>
<dbReference type="RefSeq" id="NP_001346563.1">
    <molecule id="Q80TG1-1"/>
    <property type="nucleotide sequence ID" value="NM_001359634.1"/>
</dbReference>
<dbReference type="RefSeq" id="XP_006534516.1">
    <property type="nucleotide sequence ID" value="XM_006534453.3"/>
</dbReference>
<dbReference type="RefSeq" id="XP_011247610.1">
    <property type="nucleotide sequence ID" value="XM_011249308.2"/>
</dbReference>
<dbReference type="RefSeq" id="XP_017170320.1">
    <property type="nucleotide sequence ID" value="XM_017314831.1"/>
</dbReference>
<dbReference type="RefSeq" id="XP_036012967.1">
    <molecule id="Q80TG1-1"/>
    <property type="nucleotide sequence ID" value="XM_036157074.1"/>
</dbReference>
<dbReference type="RefSeq" id="XP_036012968.1">
    <molecule id="Q80TG1-1"/>
    <property type="nucleotide sequence ID" value="XM_036157075.1"/>
</dbReference>
<dbReference type="RefSeq" id="XP_036012969.1">
    <molecule id="Q80TG1-1"/>
    <property type="nucleotide sequence ID" value="XM_036157076.1"/>
</dbReference>
<dbReference type="SMR" id="Q80TG1"/>
<dbReference type="BioGRID" id="218277">
    <property type="interactions" value="1"/>
</dbReference>
<dbReference type="ComplexPortal" id="CPX-875">
    <property type="entry name" value="NSL histone acetyltransferase complex"/>
</dbReference>
<dbReference type="FunCoup" id="Q80TG1">
    <property type="interactions" value="3716"/>
</dbReference>
<dbReference type="IntAct" id="Q80TG1">
    <property type="interactions" value="1"/>
</dbReference>
<dbReference type="MINT" id="Q80TG1"/>
<dbReference type="STRING" id="10090.ENSMUSP00000102590"/>
<dbReference type="GlyGen" id="Q80TG1">
    <property type="glycosylation" value="3 sites, 1 O-linked glycan (2 sites)"/>
</dbReference>
<dbReference type="iPTMnet" id="Q80TG1"/>
<dbReference type="PhosphoSitePlus" id="Q80TG1"/>
<dbReference type="jPOST" id="Q80TG1"/>
<dbReference type="PaxDb" id="10090-ENSMUSP00000102585"/>
<dbReference type="PeptideAtlas" id="Q80TG1"/>
<dbReference type="ProteomicsDB" id="268951">
    <molecule id="Q80TG1-1"/>
</dbReference>
<dbReference type="ProteomicsDB" id="268952">
    <molecule id="Q80TG1-2"/>
</dbReference>
<dbReference type="ProteomicsDB" id="268953">
    <molecule id="Q80TG1-3"/>
</dbReference>
<dbReference type="ProteomicsDB" id="268954">
    <molecule id="Q80TG1-4"/>
</dbReference>
<dbReference type="ProteomicsDB" id="268955">
    <molecule id="Q80TG1-5"/>
</dbReference>
<dbReference type="Pumba" id="Q80TG1"/>
<dbReference type="Antibodypedia" id="2016">
    <property type="antibodies" value="66 antibodies from 14 providers"/>
</dbReference>
<dbReference type="Ensembl" id="ENSMUST00000018556.11">
    <molecule id="Q80TG1-1"/>
    <property type="protein sequence ID" value="ENSMUSP00000018556.5"/>
    <property type="gene ID" value="ENSMUSG00000018412.17"/>
</dbReference>
<dbReference type="Ensembl" id="ENSMUST00000106977.8">
    <molecule id="Q80TG1-1"/>
    <property type="protein sequence ID" value="ENSMUSP00000102590.2"/>
    <property type="gene ID" value="ENSMUSG00000018412.17"/>
</dbReference>
<dbReference type="GeneID" id="76719"/>
<dbReference type="KEGG" id="mmu:76719"/>
<dbReference type="UCSC" id="uc007lwj.1">
    <molecule id="Q80TG1-1"/>
    <property type="organism name" value="mouse"/>
</dbReference>
<dbReference type="UCSC" id="uc007lwm.1">
    <molecule id="Q80TG1-3"/>
    <property type="organism name" value="mouse"/>
</dbReference>
<dbReference type="UCSC" id="uc007lwn.1">
    <molecule id="Q80TG1-2"/>
    <property type="organism name" value="mouse"/>
</dbReference>
<dbReference type="UCSC" id="uc007lwo.1">
    <molecule id="Q80TG1-4"/>
    <property type="organism name" value="mouse"/>
</dbReference>
<dbReference type="AGR" id="MGI:1923969"/>
<dbReference type="CTD" id="284058"/>
<dbReference type="MGI" id="MGI:1923969">
    <property type="gene designation" value="Kansl1"/>
</dbReference>
<dbReference type="VEuPathDB" id="HostDB:ENSMUSG00000018412"/>
<dbReference type="eggNOG" id="ENOG502QYK7">
    <property type="taxonomic scope" value="Eukaryota"/>
</dbReference>
<dbReference type="GeneTree" id="ENSGT00530000063688"/>
<dbReference type="HOGENOM" id="CLU_011035_0_0_1"/>
<dbReference type="InParanoid" id="Q80TG1"/>
<dbReference type="OrthoDB" id="6022640at2759"/>
<dbReference type="Reactome" id="R-MMU-3214847">
    <property type="pathway name" value="HATs acetylate histones"/>
</dbReference>
<dbReference type="Reactome" id="R-MMU-9772755">
    <property type="pathway name" value="Formation of WDR5-containing histone-modifying complexes"/>
</dbReference>
<dbReference type="BioGRID-ORCS" id="76719">
    <property type="hits" value="25 hits in 63 CRISPR screens"/>
</dbReference>
<dbReference type="ChiTaRS" id="Kansl1">
    <property type="organism name" value="mouse"/>
</dbReference>
<dbReference type="PRO" id="PR:Q80TG1"/>
<dbReference type="Proteomes" id="UP000000589">
    <property type="component" value="Chromosome 11"/>
</dbReference>
<dbReference type="RNAct" id="Q80TG1">
    <property type="molecule type" value="protein"/>
</dbReference>
<dbReference type="Bgee" id="ENSMUSG00000018412">
    <property type="expression patterns" value="Expressed in embryonic post-anal tail and 245 other cell types or tissues"/>
</dbReference>
<dbReference type="ExpressionAtlas" id="Q80TG1">
    <property type="expression patterns" value="baseline and differential"/>
</dbReference>
<dbReference type="GO" id="GO:0000123">
    <property type="term" value="C:histone acetyltransferase complex"/>
    <property type="evidence" value="ECO:0000250"/>
    <property type="project" value="UniProtKB"/>
</dbReference>
<dbReference type="GO" id="GO:0000776">
    <property type="term" value="C:kinetochore"/>
    <property type="evidence" value="ECO:0007669"/>
    <property type="project" value="UniProtKB-KW"/>
</dbReference>
<dbReference type="GO" id="GO:0005739">
    <property type="term" value="C:mitochondrion"/>
    <property type="evidence" value="ECO:0000314"/>
    <property type="project" value="UniProtKB"/>
</dbReference>
<dbReference type="GO" id="GO:0071339">
    <property type="term" value="C:MLL1 complex"/>
    <property type="evidence" value="ECO:0000250"/>
    <property type="project" value="UniProtKB"/>
</dbReference>
<dbReference type="GO" id="GO:0044545">
    <property type="term" value="C:NSL complex"/>
    <property type="evidence" value="ECO:0000314"/>
    <property type="project" value="UniProtKB"/>
</dbReference>
<dbReference type="GO" id="GO:0006325">
    <property type="term" value="P:chromatin organization"/>
    <property type="evidence" value="ECO:0007669"/>
    <property type="project" value="UniProtKB-KW"/>
</dbReference>
<dbReference type="GO" id="GO:0045893">
    <property type="term" value="P:positive regulation of DNA-templated transcription"/>
    <property type="evidence" value="ECO:0000303"/>
    <property type="project" value="ComplexPortal"/>
</dbReference>
<dbReference type="GO" id="GO:1903108">
    <property type="term" value="P:regulation of mitochondrial transcription"/>
    <property type="evidence" value="ECO:0000250"/>
    <property type="project" value="UniProtKB"/>
</dbReference>
<dbReference type="Gene3D" id="6.10.250.3170">
    <property type="match status" value="1"/>
</dbReference>
<dbReference type="InterPro" id="IPR026180">
    <property type="entry name" value="NSL1"/>
</dbReference>
<dbReference type="InterPro" id="IPR029332">
    <property type="entry name" value="PEHE_dom"/>
</dbReference>
<dbReference type="PANTHER" id="PTHR22443:SF14">
    <property type="entry name" value="KAT8 REGULATORY NSL COMPLEX SUBUNIT 1"/>
    <property type="match status" value="1"/>
</dbReference>
<dbReference type="PANTHER" id="PTHR22443">
    <property type="entry name" value="NON-SPECIFIC LETHAL 1, ISOFORM M"/>
    <property type="match status" value="1"/>
</dbReference>
<dbReference type="Pfam" id="PF15275">
    <property type="entry name" value="PEHE"/>
    <property type="match status" value="1"/>
</dbReference>
<dbReference type="SMART" id="SM01300">
    <property type="entry name" value="PEHE"/>
    <property type="match status" value="1"/>
</dbReference>
<dbReference type="PROSITE" id="PS52052">
    <property type="entry name" value="PEHE"/>
    <property type="match status" value="1"/>
</dbReference>
<comment type="function">
    <text evidence="2">Non-catalytic component of the NSL histone acetyltransferase complex, a multiprotein complex that mediates histone H4 acetylation at 'Lys-5'- and 'Lys-8' (H4K5ac and H4K8ac) at transcription start sites and promotes transcription initiation (By similarity). The NSL complex also acts as a regulator of gene expression in mitochondria (By similarity). In addition to its role in transcription, KANSL1 also plays an essential role in spindle assembly during mitosis (By similarity). Associates with microtubule ends and contributes to microtubule stability (By similarity).</text>
</comment>
<comment type="subunit">
    <text evidence="4 6 7">Component of the NSL complex at least composed of MOF/KAT8, KANSL1, KANSL2, KANSL3, MCRS1, PHF20, OGT1/OGT, WDR5 and HCFC1 (PubMed:24842875, PubMed:24898753). Interacts (via PEHE domain) with KAT8 (via HAT domain); the interaction is direct. Component of some MLL1/MLL complex, at least composed of the core components KMT2A/MLL1, ASH2L, HCFC1, WDR5 and RBBP5, as well as the facultative components BACC1, CHD8, E2F6, HSP70, INO80C, KANSL1, LAS1L, MAX, MCRS1, MGA, KAT8/MOF, PELP1, PHF20, PRP31, RING2, RUVB1/TIP49A, RUVB2/TIP49B, SENP3, TAF1, TAF4, TAF6, TAF7, TAF9 and TEX10 (By similarity).</text>
</comment>
<comment type="subcellular location">
    <subcellularLocation>
        <location evidence="2">Nucleus</location>
    </subcellularLocation>
    <subcellularLocation>
        <location evidence="2">Chromosome</location>
        <location evidence="2">Centromere</location>
        <location evidence="2">Kinetochore</location>
    </subcellularLocation>
    <subcellularLocation>
        <location evidence="8">Mitochondrion</location>
    </subcellularLocation>
    <subcellularLocation>
        <location evidence="2">Cytoplasm</location>
        <location evidence="2">Cytoskeleton</location>
        <location evidence="2">Spindle pole</location>
    </subcellularLocation>
    <text evidence="2">Concentrated in the nucleus during interphase, localizes to the spindle poles and pericentriolar region during prometaphase and metaphase, and remains associated with the spindle poles throughout anaphase.</text>
</comment>
<comment type="alternative products">
    <event type="alternative splicing"/>
    <isoform>
        <id>Q80TG1-1</id>
        <name>1</name>
        <sequence type="displayed"/>
    </isoform>
    <isoform>
        <id>Q80TG1-2</id>
        <name>2</name>
        <sequence type="described" ref="VSP_018363 VSP_018364"/>
    </isoform>
    <isoform>
        <id>Q80TG1-3</id>
        <name>3</name>
        <sequence type="described" ref="VSP_018362 VSP_018363 VSP_018364"/>
    </isoform>
    <isoform>
        <id>Q80TG1-4</id>
        <name>4</name>
        <sequence type="described" ref="VSP_018361"/>
    </isoform>
    <isoform>
        <id>Q80TG1-5</id>
        <name>5</name>
        <sequence type="described" ref="VSP_018360 VSP_018365"/>
    </isoform>
</comment>
<reference key="1">
    <citation type="journal article" date="2003" name="DNA Res.">
        <title>Prediction of the coding sequences of mouse homologues of KIAA gene: II. The complete nucleotide sequences of 400 mouse KIAA-homologous cDNAs identified by screening of terminal sequences of cDNA clones randomly sampled from size-fractionated libraries.</title>
        <authorList>
            <person name="Okazaki N."/>
            <person name="Kikuno R."/>
            <person name="Ohara R."/>
            <person name="Inamoto S."/>
            <person name="Aizawa H."/>
            <person name="Yuasa S."/>
            <person name="Nakajima D."/>
            <person name="Nagase T."/>
            <person name="Ohara O."/>
            <person name="Koga H."/>
        </authorList>
    </citation>
    <scope>NUCLEOTIDE SEQUENCE [LARGE SCALE MRNA] (ISOFORM 1)</scope>
    <source>
        <tissue>Brain</tissue>
    </source>
</reference>
<reference key="2">
    <citation type="journal article" date="2005" name="Science">
        <title>The transcriptional landscape of the mammalian genome.</title>
        <authorList>
            <person name="Carninci P."/>
            <person name="Kasukawa T."/>
            <person name="Katayama S."/>
            <person name="Gough J."/>
            <person name="Frith M.C."/>
            <person name="Maeda N."/>
            <person name="Oyama R."/>
            <person name="Ravasi T."/>
            <person name="Lenhard B."/>
            <person name="Wells C."/>
            <person name="Kodzius R."/>
            <person name="Shimokawa K."/>
            <person name="Bajic V.B."/>
            <person name="Brenner S.E."/>
            <person name="Batalov S."/>
            <person name="Forrest A.R."/>
            <person name="Zavolan M."/>
            <person name="Davis M.J."/>
            <person name="Wilming L.G."/>
            <person name="Aidinis V."/>
            <person name="Allen J.E."/>
            <person name="Ambesi-Impiombato A."/>
            <person name="Apweiler R."/>
            <person name="Aturaliya R.N."/>
            <person name="Bailey T.L."/>
            <person name="Bansal M."/>
            <person name="Baxter L."/>
            <person name="Beisel K.W."/>
            <person name="Bersano T."/>
            <person name="Bono H."/>
            <person name="Chalk A.M."/>
            <person name="Chiu K.P."/>
            <person name="Choudhary V."/>
            <person name="Christoffels A."/>
            <person name="Clutterbuck D.R."/>
            <person name="Crowe M.L."/>
            <person name="Dalla E."/>
            <person name="Dalrymple B.P."/>
            <person name="de Bono B."/>
            <person name="Della Gatta G."/>
            <person name="di Bernardo D."/>
            <person name="Down T."/>
            <person name="Engstrom P."/>
            <person name="Fagiolini M."/>
            <person name="Faulkner G."/>
            <person name="Fletcher C.F."/>
            <person name="Fukushima T."/>
            <person name="Furuno M."/>
            <person name="Futaki S."/>
            <person name="Gariboldi M."/>
            <person name="Georgii-Hemming P."/>
            <person name="Gingeras T.R."/>
            <person name="Gojobori T."/>
            <person name="Green R.E."/>
            <person name="Gustincich S."/>
            <person name="Harbers M."/>
            <person name="Hayashi Y."/>
            <person name="Hensch T.K."/>
            <person name="Hirokawa N."/>
            <person name="Hill D."/>
            <person name="Huminiecki L."/>
            <person name="Iacono M."/>
            <person name="Ikeo K."/>
            <person name="Iwama A."/>
            <person name="Ishikawa T."/>
            <person name="Jakt M."/>
            <person name="Kanapin A."/>
            <person name="Katoh M."/>
            <person name="Kawasawa Y."/>
            <person name="Kelso J."/>
            <person name="Kitamura H."/>
            <person name="Kitano H."/>
            <person name="Kollias G."/>
            <person name="Krishnan S.P."/>
            <person name="Kruger A."/>
            <person name="Kummerfeld S.K."/>
            <person name="Kurochkin I.V."/>
            <person name="Lareau L.F."/>
            <person name="Lazarevic D."/>
            <person name="Lipovich L."/>
            <person name="Liu J."/>
            <person name="Liuni S."/>
            <person name="McWilliam S."/>
            <person name="Madan Babu M."/>
            <person name="Madera M."/>
            <person name="Marchionni L."/>
            <person name="Matsuda H."/>
            <person name="Matsuzawa S."/>
            <person name="Miki H."/>
            <person name="Mignone F."/>
            <person name="Miyake S."/>
            <person name="Morris K."/>
            <person name="Mottagui-Tabar S."/>
            <person name="Mulder N."/>
            <person name="Nakano N."/>
            <person name="Nakauchi H."/>
            <person name="Ng P."/>
            <person name="Nilsson R."/>
            <person name="Nishiguchi S."/>
            <person name="Nishikawa S."/>
            <person name="Nori F."/>
            <person name="Ohara O."/>
            <person name="Okazaki Y."/>
            <person name="Orlando V."/>
            <person name="Pang K.C."/>
            <person name="Pavan W.J."/>
            <person name="Pavesi G."/>
            <person name="Pesole G."/>
            <person name="Petrovsky N."/>
            <person name="Piazza S."/>
            <person name="Reed J."/>
            <person name="Reid J.F."/>
            <person name="Ring B.Z."/>
            <person name="Ringwald M."/>
            <person name="Rost B."/>
            <person name="Ruan Y."/>
            <person name="Salzberg S.L."/>
            <person name="Sandelin A."/>
            <person name="Schneider C."/>
            <person name="Schoenbach C."/>
            <person name="Sekiguchi K."/>
            <person name="Semple C.A."/>
            <person name="Seno S."/>
            <person name="Sessa L."/>
            <person name="Sheng Y."/>
            <person name="Shibata Y."/>
            <person name="Shimada H."/>
            <person name="Shimada K."/>
            <person name="Silva D."/>
            <person name="Sinclair B."/>
            <person name="Sperling S."/>
            <person name="Stupka E."/>
            <person name="Sugiura K."/>
            <person name="Sultana R."/>
            <person name="Takenaka Y."/>
            <person name="Taki K."/>
            <person name="Tammoja K."/>
            <person name="Tan S.L."/>
            <person name="Tang S."/>
            <person name="Taylor M.S."/>
            <person name="Tegner J."/>
            <person name="Teichmann S.A."/>
            <person name="Ueda H.R."/>
            <person name="van Nimwegen E."/>
            <person name="Verardo R."/>
            <person name="Wei C.L."/>
            <person name="Yagi K."/>
            <person name="Yamanishi H."/>
            <person name="Zabarovsky E."/>
            <person name="Zhu S."/>
            <person name="Zimmer A."/>
            <person name="Hide W."/>
            <person name="Bult C."/>
            <person name="Grimmond S.M."/>
            <person name="Teasdale R.D."/>
            <person name="Liu E.T."/>
            <person name="Brusic V."/>
            <person name="Quackenbush J."/>
            <person name="Wahlestedt C."/>
            <person name="Mattick J.S."/>
            <person name="Hume D.A."/>
            <person name="Kai C."/>
            <person name="Sasaki D."/>
            <person name="Tomaru Y."/>
            <person name="Fukuda S."/>
            <person name="Kanamori-Katayama M."/>
            <person name="Suzuki M."/>
            <person name="Aoki J."/>
            <person name="Arakawa T."/>
            <person name="Iida J."/>
            <person name="Imamura K."/>
            <person name="Itoh M."/>
            <person name="Kato T."/>
            <person name="Kawaji H."/>
            <person name="Kawagashira N."/>
            <person name="Kawashima T."/>
            <person name="Kojima M."/>
            <person name="Kondo S."/>
            <person name="Konno H."/>
            <person name="Nakano K."/>
            <person name="Ninomiya N."/>
            <person name="Nishio T."/>
            <person name="Okada M."/>
            <person name="Plessy C."/>
            <person name="Shibata K."/>
            <person name="Shiraki T."/>
            <person name="Suzuki S."/>
            <person name="Tagami M."/>
            <person name="Waki K."/>
            <person name="Watahiki A."/>
            <person name="Okamura-Oho Y."/>
            <person name="Suzuki H."/>
            <person name="Kawai J."/>
            <person name="Hayashizaki Y."/>
        </authorList>
    </citation>
    <scope>NUCLEOTIDE SEQUENCE [LARGE SCALE MRNA] (ISOFORMS 2; 4 AND 5)</scope>
    <source>
        <strain>C57BL/6J</strain>
        <tissue>Testis</tissue>
        <tissue>Thymus</tissue>
    </source>
</reference>
<reference key="3">
    <citation type="journal article" date="2009" name="PLoS Biol.">
        <title>Lineage-specific biology revealed by a finished genome assembly of the mouse.</title>
        <authorList>
            <person name="Church D.M."/>
            <person name="Goodstadt L."/>
            <person name="Hillier L.W."/>
            <person name="Zody M.C."/>
            <person name="Goldstein S."/>
            <person name="She X."/>
            <person name="Bult C.J."/>
            <person name="Agarwala R."/>
            <person name="Cherry J.L."/>
            <person name="DiCuccio M."/>
            <person name="Hlavina W."/>
            <person name="Kapustin Y."/>
            <person name="Meric P."/>
            <person name="Maglott D."/>
            <person name="Birtle Z."/>
            <person name="Marques A.C."/>
            <person name="Graves T."/>
            <person name="Zhou S."/>
            <person name="Teague B."/>
            <person name="Potamousis K."/>
            <person name="Churas C."/>
            <person name="Place M."/>
            <person name="Herschleb J."/>
            <person name="Runnheim R."/>
            <person name="Forrest D."/>
            <person name="Amos-Landgraf J."/>
            <person name="Schwartz D.C."/>
            <person name="Cheng Z."/>
            <person name="Lindblad-Toh K."/>
            <person name="Eichler E.E."/>
            <person name="Ponting C.P."/>
        </authorList>
    </citation>
    <scope>NUCLEOTIDE SEQUENCE [LARGE SCALE GENOMIC DNA]</scope>
    <source>
        <strain>C57BL/6J</strain>
    </source>
</reference>
<reference key="4">
    <citation type="journal article" date="2004" name="Genome Res.">
        <title>The status, quality, and expansion of the NIH full-length cDNA project: the Mammalian Gene Collection (MGC).</title>
        <authorList>
            <consortium name="The MGC Project Team"/>
        </authorList>
    </citation>
    <scope>NUCLEOTIDE SEQUENCE [LARGE SCALE MRNA] (ISOFORMS 1 AND 3)</scope>
    <source>
        <strain>C3H/He</strain>
        <strain>C57BL/6J</strain>
        <strain>FVB/N</strain>
        <tissue>Embryonic brain</tissue>
        <tissue>Mammary gland</tissue>
        <tissue>Mesenchymal stem cell</tissue>
    </source>
</reference>
<reference key="5">
    <citation type="journal article" date="2010" name="Cell">
        <title>A tissue-specific atlas of mouse protein phosphorylation and expression.</title>
        <authorList>
            <person name="Huttlin E.L."/>
            <person name="Jedrychowski M.P."/>
            <person name="Elias J.E."/>
            <person name="Goswami T."/>
            <person name="Rad R."/>
            <person name="Beausoleil S.A."/>
            <person name="Villen J."/>
            <person name="Haas W."/>
            <person name="Sowa M.E."/>
            <person name="Gygi S.P."/>
        </authorList>
    </citation>
    <scope>PHOSPHORYLATION [LARGE SCALE ANALYSIS] AT SER-249 AND SER-268</scope>
    <scope>IDENTIFICATION BY MASS SPECTROMETRY [LARGE SCALE ANALYSIS]</scope>
    <source>
        <tissue>Brain</tissue>
        <tissue>Kidney</tissue>
        <tissue>Liver</tissue>
        <tissue>Lung</tissue>
        <tissue>Pancreas</tissue>
        <tissue>Spleen</tissue>
    </source>
</reference>
<reference key="6">
    <citation type="journal article" date="2014" name="Elife">
        <title>MOF-associated complexes ensure stem cell identity and Xist repression.</title>
        <authorList>
            <person name="Chelmicki T."/>
            <person name="Duendar F."/>
            <person name="Turley M.J."/>
            <person name="Khanam T."/>
            <person name="Aktas T."/>
            <person name="Ramirez F."/>
            <person name="Gendrel A.V."/>
            <person name="Wright P.R."/>
            <person name="Videm P."/>
            <person name="Backofen R."/>
            <person name="Heard E."/>
            <person name="Manke T."/>
            <person name="Akhtar A."/>
        </authorList>
    </citation>
    <scope>IDENTIFICATION IN THE NSL COMPLEX</scope>
</reference>
<reference key="7">
    <citation type="journal article" date="2014" name="Elife">
        <title>Mof-associated complexes have overlapping and unique roles in regulating pluripotency in embryonic stem cells and during differentiation.</title>
        <authorList>
            <person name="Ravens S."/>
            <person name="Fournier M."/>
            <person name="Ye T."/>
            <person name="Stierle M."/>
            <person name="Dembele D."/>
            <person name="Chavant V."/>
            <person name="Tora L."/>
        </authorList>
    </citation>
    <scope>IDENTIFICATION IN NSL COMPLEX</scope>
</reference>
<reference key="8">
    <citation type="journal article" date="2023" name="Nat. Metab.">
        <title>COX17 acetylation via MOF-KANSL complex promotes mitochondrial integrity and function.</title>
        <authorList>
            <person name="Guhathakurta S."/>
            <person name="Erdogdu N.U."/>
            <person name="Hoffmann J.J."/>
            <person name="Grzadzielewska I."/>
            <person name="Schendzielorz A."/>
            <person name="Seyfferth J."/>
            <person name="Maartensson C.U."/>
            <person name="Corrado M."/>
            <person name="Karoutas A."/>
            <person name="Warscheid B."/>
            <person name="Pfanner N."/>
            <person name="Becker T."/>
            <person name="Akhtar A."/>
        </authorList>
    </citation>
    <scope>SUBCELLULAR LOCATION</scope>
</reference>
<accession>Q80TG1</accession>
<accession>A2A5Y5</accession>
<accession>Q3TT88</accession>
<accession>Q3U5D8</accession>
<accession>Q3V3N3</accession>
<accession>Q7TMU3</accession>
<accession>Q80XP7</accession>
<accession>Q8R3L6</accession>
<accession>Q9D9G0</accession>
<evidence type="ECO:0000250" key="1"/>
<evidence type="ECO:0000250" key="2">
    <source>
        <dbReference type="UniProtKB" id="Q7Z3B3"/>
    </source>
</evidence>
<evidence type="ECO:0000255" key="3"/>
<evidence type="ECO:0000255" key="4">
    <source>
        <dbReference type="PROSITE-ProRule" id="PRU01397"/>
    </source>
</evidence>
<evidence type="ECO:0000256" key="5">
    <source>
        <dbReference type="SAM" id="MobiDB-lite"/>
    </source>
</evidence>
<evidence type="ECO:0000269" key="6">
    <source>
    </source>
</evidence>
<evidence type="ECO:0000269" key="7">
    <source>
    </source>
</evidence>
<evidence type="ECO:0000269" key="8">
    <source>
    </source>
</evidence>
<evidence type="ECO:0000303" key="9">
    <source>
    </source>
</evidence>
<evidence type="ECO:0000303" key="10">
    <source>
    </source>
</evidence>
<evidence type="ECO:0000305" key="11"/>
<evidence type="ECO:0007744" key="12">
    <source>
    </source>
</evidence>
<organism>
    <name type="scientific">Mus musculus</name>
    <name type="common">Mouse</name>
    <dbReference type="NCBI Taxonomy" id="10090"/>
    <lineage>
        <taxon>Eukaryota</taxon>
        <taxon>Metazoa</taxon>
        <taxon>Chordata</taxon>
        <taxon>Craniata</taxon>
        <taxon>Vertebrata</taxon>
        <taxon>Euteleostomi</taxon>
        <taxon>Mammalia</taxon>
        <taxon>Eutheria</taxon>
        <taxon>Euarchontoglires</taxon>
        <taxon>Glires</taxon>
        <taxon>Rodentia</taxon>
        <taxon>Myomorpha</taxon>
        <taxon>Muroidea</taxon>
        <taxon>Muridae</taxon>
        <taxon>Murinae</taxon>
        <taxon>Mus</taxon>
        <taxon>Mus</taxon>
    </lineage>
</organism>
<keyword id="KW-0007">Acetylation</keyword>
<keyword id="KW-0025">Alternative splicing</keyword>
<keyword id="KW-0137">Centromere</keyword>
<keyword id="KW-0156">Chromatin regulator</keyword>
<keyword id="KW-0158">Chromosome</keyword>
<keyword id="KW-0175">Coiled coil</keyword>
<keyword id="KW-0963">Cytoplasm</keyword>
<keyword id="KW-0206">Cytoskeleton</keyword>
<keyword id="KW-1017">Isopeptide bond</keyword>
<keyword id="KW-0995">Kinetochore</keyword>
<keyword id="KW-0493">Microtubule</keyword>
<keyword id="KW-0496">Mitochondrion</keyword>
<keyword id="KW-0539">Nucleus</keyword>
<keyword id="KW-0597">Phosphoprotein</keyword>
<keyword id="KW-1185">Reference proteome</keyword>
<keyword id="KW-0832">Ubl conjugation</keyword>
<gene>
    <name type="primary">Kansl1</name>
    <name type="synonym">Kiaa1267</name>
    <name type="synonym">Nsl1</name>
</gene>
<protein>
    <recommendedName>
        <fullName>KAT8 regulatory NSL complex subunit 1</fullName>
    </recommendedName>
    <alternativeName>
        <fullName>NSL complex protein NSL1</fullName>
    </alternativeName>
    <alternativeName>
        <fullName>Non-specific lethal 1 homolog</fullName>
    </alternativeName>
</protein>
<proteinExistence type="evidence at protein level"/>
<sequence length="1036" mass="113179">MAAMAPALTDAAAEAHHIRFKLAPPSSTLSPGSAENNGNANILISANGTKRKAIAAEDPSLDFRNNPTKEDLGKLQPLVASYLCSDVTSVPAKESLKLQGVFSKQTVLKSHPLLSQSYELRAELLGRQPVLEFSLENLRTMNTSGQTALPQAPVNGLAKKLTKSSTHSDHDNSSSLNGGKRSLTSSSLQGGEVGGPDSGNLKGGMTNCTLPHRSLDIQHTTLYSNNSTANKSSVNSMDQPALQGSSRLSPSTDSSSNLTNVKLEVKKSPLSSILFSALDSDTRITALLRRQADIEIRARRLQKRLQVVQAKQVERHLQHQLGGFLETTLSKLPNLESLRSRSQLMLTRKAEAALRKAASESATSEGLSNFLKSDSISEELERFTASGIANLRCSEQAFDSDVTDSSSGGESDIEEEELTRADPEQCHVPLKRRSEWRWAADRAAIVSRWNWLQAHVSDLEYRIRQQTDIYKQIRANKGLIVLGEAPFPDHTTDLLSLSSEVKTDHGRDKLIESVSQPSENHGILVSNITESLSTKSCGAPRPVNGVVNSLQPVLADQVPGDSSDAEEQLHKKQRLNLVSSSDGTCVAARTRPVLTCKKRRLVRPSSIVPLSKKVHRNVRSGCDVNPSCALCGSGSVNTMPPEIHYEAPLLERLSQLDSCVHPVLAFPDDVPTSLHFQSMLKSQWQNKPFDKIKPTKKFSLKHRATMPCSLSDPVRKDRHKLVNSFLTTAMLKHHTDMSSPSYLTATHHPPHSPLVRQLSTSSDTSTPTSSGSQVAASTSQPVRRRRGESSFDINNIVIPMSVAATTRVEKLQYKEILTPSWREVDVQSLKGSPDEENEEIEDLSDAAFAALHAKCEEMERARWLWTTSVPPQRRGSRSYRSSDGRTTPQLGSANPSTPQPASPDVSSSHSLSEFSHGQSPRSPISPELHSAPLTPVARDSLRHLASEDTRCSTPELGLDEQSVQPWERRTFPLAYSPQAECEEQLDAQDTAARCTRRTSGSKTGREAEVAPTSPPVVPLKSRHLAATVTAQRPAHR</sequence>
<feature type="chain" id="PRO_0000234566" description="KAT8 regulatory NSL complex subunit 1">
    <location>
        <begin position="1"/>
        <end position="1036"/>
    </location>
</feature>
<feature type="domain" description="PEHE" evidence="4">
    <location>
        <begin position="815"/>
        <end position="966"/>
    </location>
</feature>
<feature type="region of interest" description="Disordered" evidence="5">
    <location>
        <begin position="145"/>
        <end position="211"/>
    </location>
</feature>
<feature type="region of interest" description="Disordered" evidence="5">
    <location>
        <begin position="226"/>
        <end position="257"/>
    </location>
</feature>
<feature type="region of interest" description="Disordered" evidence="5">
    <location>
        <begin position="399"/>
        <end position="423"/>
    </location>
</feature>
<feature type="region of interest" description="Disordered" evidence="5">
    <location>
        <begin position="739"/>
        <end position="787"/>
    </location>
</feature>
<feature type="region of interest" description="Required for activation of KAT8 histone acetyltransferase activity" evidence="1">
    <location>
        <begin position="781"/>
        <end position="813"/>
    </location>
</feature>
<feature type="region of interest" description="Interaction with KAT8 HAT domain" evidence="4">
    <location>
        <begin position="841"/>
        <end position="859"/>
    </location>
</feature>
<feature type="region of interest" description="Disordered" evidence="5">
    <location>
        <begin position="869"/>
        <end position="931"/>
    </location>
</feature>
<feature type="region of interest" description="Disordered" evidence="5">
    <location>
        <begin position="989"/>
        <end position="1020"/>
    </location>
</feature>
<feature type="coiled-coil region" evidence="3">
    <location>
        <begin position="285"/>
        <end position="312"/>
    </location>
</feature>
<feature type="compositionally biased region" description="Polar residues" evidence="5">
    <location>
        <begin position="226"/>
        <end position="244"/>
    </location>
</feature>
<feature type="compositionally biased region" description="Low complexity" evidence="5">
    <location>
        <begin position="245"/>
        <end position="256"/>
    </location>
</feature>
<feature type="compositionally biased region" description="Low complexity" evidence="5">
    <location>
        <begin position="759"/>
        <end position="772"/>
    </location>
</feature>
<feature type="compositionally biased region" description="Polar residues" evidence="5">
    <location>
        <begin position="886"/>
        <end position="896"/>
    </location>
</feature>
<feature type="compositionally biased region" description="Low complexity" evidence="5">
    <location>
        <begin position="906"/>
        <end position="919"/>
    </location>
</feature>
<feature type="modified residue" description="N6-acetyllysine" evidence="2">
    <location>
        <position position="104"/>
    </location>
</feature>
<feature type="modified residue" description="Phosphoserine" evidence="12">
    <location>
        <position position="249"/>
    </location>
</feature>
<feature type="modified residue" description="Phosphoserine" evidence="12">
    <location>
        <position position="268"/>
    </location>
</feature>
<feature type="modified residue" description="Phosphoserine" evidence="2">
    <location>
        <position position="922"/>
    </location>
</feature>
<feature type="modified residue" description="Phosphoserine" evidence="2">
    <location>
        <position position="925"/>
    </location>
</feature>
<feature type="modified residue" description="Phosphothreonine" evidence="2">
    <location>
        <position position="934"/>
    </location>
</feature>
<feature type="modified residue" description="Phosphoserine" evidence="2">
    <location>
        <position position="976"/>
    </location>
</feature>
<feature type="cross-link" description="Glycyl lysine isopeptide (Lys-Gly) (interchain with G-Cter in SUMO2)" evidence="2">
    <location>
        <position position="262"/>
    </location>
</feature>
<feature type="cross-link" description="Glycyl lysine isopeptide (Lys-Gly) (interchain with G-Cter in SUMO2)" evidence="2">
    <location>
        <position position="331"/>
    </location>
</feature>
<feature type="splice variant" id="VSP_018360" description="In isoform 5." evidence="10">
    <location>
        <begin position="1"/>
        <end position="770"/>
    </location>
</feature>
<feature type="splice variant" id="VSP_018361" description="In isoform 4." evidence="10">
    <location>
        <begin position="431"/>
        <end position="1036"/>
    </location>
</feature>
<feature type="splice variant" id="VSP_018362" description="In isoform 3." evidence="9">
    <location>
        <begin position="478"/>
        <end position="510"/>
    </location>
</feature>
<feature type="splice variant" id="VSP_018363" description="In isoform 2 and isoform 3." evidence="9 10">
    <original>HRNVRSGCDVNPSCALCGSGSVNTMPPEI</original>
    <variation>GAQRTGLRSALILSRVGEPPSSPVNLQNY</variation>
    <location>
        <begin position="615"/>
        <end position="643"/>
    </location>
</feature>
<feature type="splice variant" id="VSP_018364" description="In isoform 2 and isoform 3." evidence="9 10">
    <location>
        <begin position="644"/>
        <end position="1036"/>
    </location>
</feature>
<feature type="splice variant" id="VSP_018365" description="In isoform 5." evidence="10">
    <original>GSQVAASTS</original>
    <variation>MCSLRSWNQ</variation>
    <location>
        <begin position="771"/>
        <end position="779"/>
    </location>
</feature>
<feature type="sequence conflict" description="In Ref. 2; BAE36437." evidence="11" ref="2">
    <original>D</original>
    <variation>N</variation>
    <location>
        <position position="197"/>
    </location>
</feature>